<dbReference type="EC" id="2.7.1.33" evidence="1"/>
<dbReference type="EMBL" id="BX936398">
    <property type="protein sequence ID" value="CAH19514.1"/>
    <property type="molecule type" value="Genomic_DNA"/>
</dbReference>
<dbReference type="RefSeq" id="WP_002212290.1">
    <property type="nucleotide sequence ID" value="NZ_CP009712.1"/>
</dbReference>
<dbReference type="SMR" id="Q66FR1"/>
<dbReference type="GeneID" id="57974956"/>
<dbReference type="KEGG" id="ypo:BZ17_2304"/>
<dbReference type="KEGG" id="yps:YPTB0274"/>
<dbReference type="PATRIC" id="fig|273123.14.peg.2432"/>
<dbReference type="UniPathway" id="UPA00241">
    <property type="reaction ID" value="UER00352"/>
</dbReference>
<dbReference type="Proteomes" id="UP000001011">
    <property type="component" value="Chromosome"/>
</dbReference>
<dbReference type="GO" id="GO:0005737">
    <property type="term" value="C:cytoplasm"/>
    <property type="evidence" value="ECO:0007669"/>
    <property type="project" value="UniProtKB-SubCell"/>
</dbReference>
<dbReference type="GO" id="GO:0005524">
    <property type="term" value="F:ATP binding"/>
    <property type="evidence" value="ECO:0007669"/>
    <property type="project" value="UniProtKB-UniRule"/>
</dbReference>
<dbReference type="GO" id="GO:0004594">
    <property type="term" value="F:pantothenate kinase activity"/>
    <property type="evidence" value="ECO:0007669"/>
    <property type="project" value="UniProtKB-UniRule"/>
</dbReference>
<dbReference type="GO" id="GO:0015937">
    <property type="term" value="P:coenzyme A biosynthetic process"/>
    <property type="evidence" value="ECO:0007669"/>
    <property type="project" value="UniProtKB-UniRule"/>
</dbReference>
<dbReference type="CDD" id="cd02025">
    <property type="entry name" value="PanK"/>
    <property type="match status" value="1"/>
</dbReference>
<dbReference type="FunFam" id="3.40.50.300:FF:000242">
    <property type="entry name" value="Pantothenate kinase"/>
    <property type="match status" value="1"/>
</dbReference>
<dbReference type="Gene3D" id="3.40.50.300">
    <property type="entry name" value="P-loop containing nucleotide triphosphate hydrolases"/>
    <property type="match status" value="1"/>
</dbReference>
<dbReference type="HAMAP" id="MF_00215">
    <property type="entry name" value="Pantothen_kinase_1"/>
    <property type="match status" value="1"/>
</dbReference>
<dbReference type="InterPro" id="IPR027417">
    <property type="entry name" value="P-loop_NTPase"/>
</dbReference>
<dbReference type="InterPro" id="IPR004566">
    <property type="entry name" value="PanK"/>
</dbReference>
<dbReference type="InterPro" id="IPR006083">
    <property type="entry name" value="PRK/URK"/>
</dbReference>
<dbReference type="NCBIfam" id="TIGR00554">
    <property type="entry name" value="panK_bact"/>
    <property type="match status" value="1"/>
</dbReference>
<dbReference type="PANTHER" id="PTHR10285">
    <property type="entry name" value="URIDINE KINASE"/>
    <property type="match status" value="1"/>
</dbReference>
<dbReference type="Pfam" id="PF00485">
    <property type="entry name" value="PRK"/>
    <property type="match status" value="1"/>
</dbReference>
<dbReference type="PIRSF" id="PIRSF000545">
    <property type="entry name" value="Pantothenate_kin"/>
    <property type="match status" value="1"/>
</dbReference>
<dbReference type="SUPFAM" id="SSF52540">
    <property type="entry name" value="P-loop containing nucleoside triphosphate hydrolases"/>
    <property type="match status" value="1"/>
</dbReference>
<accession>Q66FR1</accession>
<keyword id="KW-0067">ATP-binding</keyword>
<keyword id="KW-0173">Coenzyme A biosynthesis</keyword>
<keyword id="KW-0963">Cytoplasm</keyword>
<keyword id="KW-0418">Kinase</keyword>
<keyword id="KW-0547">Nucleotide-binding</keyword>
<keyword id="KW-0808">Transferase</keyword>
<proteinExistence type="inferred from homology"/>
<protein>
    <recommendedName>
        <fullName evidence="1">Pantothenate kinase</fullName>
        <ecNumber evidence="1">2.7.1.33</ecNumber>
    </recommendedName>
    <alternativeName>
        <fullName evidence="1">Pantothenic acid kinase</fullName>
    </alternativeName>
</protein>
<sequence length="316" mass="36016">MTKREQSLATPYLQFDRTQWAALRDSVPLTLTEEEIVKLKGINEDLSLDEVAQIYLPLSRLLNFYISSNLRRQAVLEQFLGTDGQRIPYVIGIAGSVAVGKSTTARLLQALLSRWPEHRSVELITTDGFLHPNKVLNERGLMKKKGFPESYDMHNLVKFVSEVKSGADYVTAPVYSHLIYDVVPDGNKVIKQPDILILEGLNVLQSGMDYPHDPHHVFVSDFVDFSIYVDAPEDLLQSWYINRFLKFRQGAFSNPDSYFHNYAKLPETEAIKIATQLWNEINGLNLKQNILPTRERASLIMTKSANHAVESVRLRK</sequence>
<name>COAA_YERPS</name>
<feature type="chain" id="PRO_1000043278" description="Pantothenate kinase">
    <location>
        <begin position="1"/>
        <end position="316"/>
    </location>
</feature>
<feature type="binding site" evidence="1">
    <location>
        <begin position="95"/>
        <end position="102"/>
    </location>
    <ligand>
        <name>ATP</name>
        <dbReference type="ChEBI" id="CHEBI:30616"/>
    </ligand>
</feature>
<reference key="1">
    <citation type="journal article" date="2004" name="Proc. Natl. Acad. Sci. U.S.A.">
        <title>Insights into the evolution of Yersinia pestis through whole-genome comparison with Yersinia pseudotuberculosis.</title>
        <authorList>
            <person name="Chain P.S.G."/>
            <person name="Carniel E."/>
            <person name="Larimer F.W."/>
            <person name="Lamerdin J."/>
            <person name="Stoutland P.O."/>
            <person name="Regala W.M."/>
            <person name="Georgescu A.M."/>
            <person name="Vergez L.M."/>
            <person name="Land M.L."/>
            <person name="Motin V.L."/>
            <person name="Brubaker R.R."/>
            <person name="Fowler J."/>
            <person name="Hinnebusch J."/>
            <person name="Marceau M."/>
            <person name="Medigue C."/>
            <person name="Simonet M."/>
            <person name="Chenal-Francisque V."/>
            <person name="Souza B."/>
            <person name="Dacheux D."/>
            <person name="Elliott J.M."/>
            <person name="Derbise A."/>
            <person name="Hauser L.J."/>
            <person name="Garcia E."/>
        </authorList>
    </citation>
    <scope>NUCLEOTIDE SEQUENCE [LARGE SCALE GENOMIC DNA]</scope>
    <source>
        <strain>IP32953</strain>
    </source>
</reference>
<evidence type="ECO:0000255" key="1">
    <source>
        <dbReference type="HAMAP-Rule" id="MF_00215"/>
    </source>
</evidence>
<comment type="catalytic activity">
    <reaction evidence="1">
        <text>(R)-pantothenate + ATP = (R)-4'-phosphopantothenate + ADP + H(+)</text>
        <dbReference type="Rhea" id="RHEA:16373"/>
        <dbReference type="ChEBI" id="CHEBI:10986"/>
        <dbReference type="ChEBI" id="CHEBI:15378"/>
        <dbReference type="ChEBI" id="CHEBI:29032"/>
        <dbReference type="ChEBI" id="CHEBI:30616"/>
        <dbReference type="ChEBI" id="CHEBI:456216"/>
        <dbReference type="EC" id="2.7.1.33"/>
    </reaction>
</comment>
<comment type="pathway">
    <text evidence="1">Cofactor biosynthesis; coenzyme A biosynthesis; CoA from (R)-pantothenate: step 1/5.</text>
</comment>
<comment type="subcellular location">
    <subcellularLocation>
        <location evidence="1">Cytoplasm</location>
    </subcellularLocation>
</comment>
<comment type="similarity">
    <text evidence="1">Belongs to the prokaryotic pantothenate kinase family.</text>
</comment>
<gene>
    <name evidence="1" type="primary">coaA</name>
    <name type="ordered locus">YPTB0274</name>
</gene>
<organism>
    <name type="scientific">Yersinia pseudotuberculosis serotype I (strain IP32953)</name>
    <dbReference type="NCBI Taxonomy" id="273123"/>
    <lineage>
        <taxon>Bacteria</taxon>
        <taxon>Pseudomonadati</taxon>
        <taxon>Pseudomonadota</taxon>
        <taxon>Gammaproteobacteria</taxon>
        <taxon>Enterobacterales</taxon>
        <taxon>Yersiniaceae</taxon>
        <taxon>Yersinia</taxon>
    </lineage>
</organism>